<reference key="1">
    <citation type="journal article" date="1982" name="Eur. J. Biochem.">
        <title>Insect immunity: isolation and structure of cecropins B and D from pupae of the Chinese oak silk moth, Antheraea pernyi.</title>
        <authorList>
            <person name="Qu X.-M."/>
            <person name="Steiner H."/>
            <person name="Engstroem A."/>
            <person name="Bennich H."/>
            <person name="Boman H.G."/>
        </authorList>
    </citation>
    <scope>PARTIAL PROTEIN SEQUENCE</scope>
</reference>
<reference key="2">
    <citation type="journal article" date="1987" name="Biomed. Environ. Mass Spectrom.">
        <title>Plasma desorption mass spectrometry coupled with conventional peptide sequencing techniques.</title>
        <authorList>
            <person name="Craig A.G."/>
            <person name="Engstrom A."/>
            <person name="Bennich H."/>
            <person name="Kamensky I."/>
        </authorList>
    </citation>
    <scope>PROTEIN SEQUENCE</scope>
    <scope>AMIDATION AT LEU-35</scope>
</reference>
<accession>P01509</accession>
<keyword id="KW-0027">Amidation</keyword>
<keyword id="KW-0044">Antibiotic</keyword>
<keyword id="KW-0929">Antimicrobial</keyword>
<keyword id="KW-0903">Direct protein sequencing</keyword>
<keyword id="KW-0391">Immunity</keyword>
<keyword id="KW-0399">Innate immunity</keyword>
<keyword id="KW-0964">Secreted</keyword>
<name>CECB_ANTPE</name>
<protein>
    <recommendedName>
        <fullName>Cecropin-B</fullName>
    </recommendedName>
</protein>
<feature type="peptide" id="PRO_0000044677" description="Cecropin-B">
    <location>
        <begin position="1"/>
        <end position="35"/>
    </location>
</feature>
<feature type="modified residue" description="Leucine amide" evidence="1">
    <location>
        <position position="35"/>
    </location>
</feature>
<evidence type="ECO:0000269" key="1">
    <source>
    </source>
</evidence>
<evidence type="ECO:0000305" key="2"/>
<dbReference type="PIR" id="A54725">
    <property type="entry name" value="CKAOBP"/>
</dbReference>
<dbReference type="SMR" id="P01509"/>
<dbReference type="GO" id="GO:0005576">
    <property type="term" value="C:extracellular region"/>
    <property type="evidence" value="ECO:0007669"/>
    <property type="project" value="UniProtKB-SubCell"/>
</dbReference>
<dbReference type="GO" id="GO:0019731">
    <property type="term" value="P:antibacterial humoral response"/>
    <property type="evidence" value="ECO:0007669"/>
    <property type="project" value="InterPro"/>
</dbReference>
<dbReference type="GO" id="GO:0050830">
    <property type="term" value="P:defense response to Gram-positive bacterium"/>
    <property type="evidence" value="ECO:0007669"/>
    <property type="project" value="UniProtKB-ARBA"/>
</dbReference>
<dbReference type="GO" id="GO:0045087">
    <property type="term" value="P:innate immune response"/>
    <property type="evidence" value="ECO:0007669"/>
    <property type="project" value="UniProtKB-KW"/>
</dbReference>
<dbReference type="InterPro" id="IPR000875">
    <property type="entry name" value="Cecropin"/>
</dbReference>
<dbReference type="Pfam" id="PF00272">
    <property type="entry name" value="Cecropin"/>
    <property type="match status" value="1"/>
</dbReference>
<dbReference type="PROSITE" id="PS00268">
    <property type="entry name" value="CECROPIN"/>
    <property type="match status" value="1"/>
</dbReference>
<proteinExistence type="evidence at protein level"/>
<organism>
    <name type="scientific">Antheraea pernyi</name>
    <name type="common">Chinese oak silk moth</name>
    <name type="synonym">Bombyx pernyi</name>
    <dbReference type="NCBI Taxonomy" id="7119"/>
    <lineage>
        <taxon>Eukaryota</taxon>
        <taxon>Metazoa</taxon>
        <taxon>Ecdysozoa</taxon>
        <taxon>Arthropoda</taxon>
        <taxon>Hexapoda</taxon>
        <taxon>Insecta</taxon>
        <taxon>Pterygota</taxon>
        <taxon>Neoptera</taxon>
        <taxon>Endopterygota</taxon>
        <taxon>Lepidoptera</taxon>
        <taxon>Glossata</taxon>
        <taxon>Ditrysia</taxon>
        <taxon>Bombycoidea</taxon>
        <taxon>Saturniidae</taxon>
        <taxon>Saturniinae</taxon>
        <taxon>Saturniini</taxon>
        <taxon>Antheraea</taxon>
    </lineage>
</organism>
<sequence>KWKIFKKIEKVGRNIRNGIIKAGPAVAVLGEAKAL</sequence>
<comment type="function">
    <text>Cecropins have lytic and antibacterial activity against several Gram-positive and Gram-negative bacteria.</text>
</comment>
<comment type="subcellular location">
    <subcellularLocation>
        <location>Secreted</location>
    </subcellularLocation>
</comment>
<comment type="similarity">
    <text evidence="2">Belongs to the cecropin family.</text>
</comment>